<accession>Q0JJD1</accession>
<accession>A0A0P0V858</accession>
<accession>Q94J38</accession>
<dbReference type="EC" id="3.5.2.3"/>
<dbReference type="EMBL" id="AP003076">
    <property type="protein sequence ID" value="BAB56025.1"/>
    <property type="status" value="ALT_INIT"/>
    <property type="molecule type" value="Genomic_DNA"/>
</dbReference>
<dbReference type="EMBL" id="AP008207">
    <property type="protein sequence ID" value="BAF06147.1"/>
    <property type="molecule type" value="Genomic_DNA"/>
</dbReference>
<dbReference type="EMBL" id="AP014957">
    <property type="protein sequence ID" value="BAS74327.1"/>
    <property type="molecule type" value="Genomic_DNA"/>
</dbReference>
<dbReference type="EMBL" id="CM000138">
    <property type="protein sequence ID" value="EAZ13525.1"/>
    <property type="status" value="ALT_INIT"/>
    <property type="molecule type" value="Genomic_DNA"/>
</dbReference>
<dbReference type="EMBL" id="AK122010">
    <property type="protein sequence ID" value="BAH00753.1"/>
    <property type="molecule type" value="mRNA"/>
</dbReference>
<dbReference type="RefSeq" id="XP_015621519.1">
    <property type="nucleotide sequence ID" value="XM_015766033.1"/>
</dbReference>
<dbReference type="SMR" id="Q0JJD1"/>
<dbReference type="FunCoup" id="Q0JJD1">
    <property type="interactions" value="1094"/>
</dbReference>
<dbReference type="STRING" id="39947.Q0JJD1"/>
<dbReference type="MEROPS" id="M38.A02"/>
<dbReference type="PaxDb" id="39947-Q0JJD1"/>
<dbReference type="EnsemblPlants" id="Os01t0747500-01">
    <property type="protein sequence ID" value="Os01t0747500-01"/>
    <property type="gene ID" value="Os01g0747500"/>
</dbReference>
<dbReference type="Gramene" id="Os01t0747500-01">
    <property type="protein sequence ID" value="Os01t0747500-01"/>
    <property type="gene ID" value="Os01g0747500"/>
</dbReference>
<dbReference type="KEGG" id="dosa:Os01g0747500"/>
<dbReference type="eggNOG" id="KOG2902">
    <property type="taxonomic scope" value="Eukaryota"/>
</dbReference>
<dbReference type="HOGENOM" id="CLU_041558_1_0_1"/>
<dbReference type="InParanoid" id="Q0JJD1"/>
<dbReference type="OMA" id="TLHHISM"/>
<dbReference type="OrthoDB" id="1670005at2759"/>
<dbReference type="UniPathway" id="UPA00070">
    <property type="reaction ID" value="UER00117"/>
</dbReference>
<dbReference type="Proteomes" id="UP000000763">
    <property type="component" value="Chromosome 1"/>
</dbReference>
<dbReference type="Proteomes" id="UP000007752">
    <property type="component" value="Chromosome 1"/>
</dbReference>
<dbReference type="Proteomes" id="UP000059680">
    <property type="component" value="Chromosome 1"/>
</dbReference>
<dbReference type="GO" id="GO:0005737">
    <property type="term" value="C:cytoplasm"/>
    <property type="evidence" value="ECO:0000318"/>
    <property type="project" value="GO_Central"/>
</dbReference>
<dbReference type="GO" id="GO:0005739">
    <property type="term" value="C:mitochondrion"/>
    <property type="evidence" value="ECO:0007669"/>
    <property type="project" value="UniProtKB-SubCell"/>
</dbReference>
<dbReference type="GO" id="GO:0004151">
    <property type="term" value="F:dihydroorotase activity"/>
    <property type="evidence" value="ECO:0000318"/>
    <property type="project" value="GO_Central"/>
</dbReference>
<dbReference type="GO" id="GO:0046872">
    <property type="term" value="F:metal ion binding"/>
    <property type="evidence" value="ECO:0007669"/>
    <property type="project" value="UniProtKB-KW"/>
</dbReference>
<dbReference type="GO" id="GO:0006207">
    <property type="term" value="P:'de novo' pyrimidine nucleobase biosynthetic process"/>
    <property type="evidence" value="ECO:0000318"/>
    <property type="project" value="GO_Central"/>
</dbReference>
<dbReference type="GO" id="GO:0044205">
    <property type="term" value="P:'de novo' UMP biosynthetic process"/>
    <property type="evidence" value="ECO:0007669"/>
    <property type="project" value="UniProtKB-UniPathway"/>
</dbReference>
<dbReference type="GO" id="GO:0006221">
    <property type="term" value="P:pyrimidine nucleotide biosynthetic process"/>
    <property type="evidence" value="ECO:0000318"/>
    <property type="project" value="GO_Central"/>
</dbReference>
<dbReference type="CDD" id="cd01294">
    <property type="entry name" value="DHOase"/>
    <property type="match status" value="1"/>
</dbReference>
<dbReference type="FunFam" id="3.20.20.140:FF:000006">
    <property type="entry name" value="Dihydroorotase"/>
    <property type="match status" value="1"/>
</dbReference>
<dbReference type="Gene3D" id="3.20.20.140">
    <property type="entry name" value="Metal-dependent hydrolases"/>
    <property type="match status" value="1"/>
</dbReference>
<dbReference type="HAMAP" id="MF_00219">
    <property type="entry name" value="PyrC_classII"/>
    <property type="match status" value="1"/>
</dbReference>
<dbReference type="InterPro" id="IPR006680">
    <property type="entry name" value="Amidohydro-rel"/>
</dbReference>
<dbReference type="InterPro" id="IPR004721">
    <property type="entry name" value="DHOdimr"/>
</dbReference>
<dbReference type="InterPro" id="IPR002195">
    <property type="entry name" value="Dihydroorotase_CS"/>
</dbReference>
<dbReference type="InterPro" id="IPR032466">
    <property type="entry name" value="Metal_Hydrolase"/>
</dbReference>
<dbReference type="NCBIfam" id="TIGR00856">
    <property type="entry name" value="pyrC_dimer"/>
    <property type="match status" value="1"/>
</dbReference>
<dbReference type="PANTHER" id="PTHR43137">
    <property type="entry name" value="DIHYDROOROTASE"/>
    <property type="match status" value="1"/>
</dbReference>
<dbReference type="PANTHER" id="PTHR43137:SF1">
    <property type="entry name" value="DIHYDROOROTASE"/>
    <property type="match status" value="1"/>
</dbReference>
<dbReference type="Pfam" id="PF01979">
    <property type="entry name" value="Amidohydro_1"/>
    <property type="match status" value="1"/>
</dbReference>
<dbReference type="SUPFAM" id="SSF51556">
    <property type="entry name" value="Metallo-dependent hydrolases"/>
    <property type="match status" value="1"/>
</dbReference>
<dbReference type="PROSITE" id="PS00482">
    <property type="entry name" value="DIHYDROOROTASE_1"/>
    <property type="match status" value="1"/>
</dbReference>
<dbReference type="PROSITE" id="PS00483">
    <property type="entry name" value="DIHYDROOROTASE_2"/>
    <property type="match status" value="1"/>
</dbReference>
<organism>
    <name type="scientific">Oryza sativa subsp. japonica</name>
    <name type="common">Rice</name>
    <dbReference type="NCBI Taxonomy" id="39947"/>
    <lineage>
        <taxon>Eukaryota</taxon>
        <taxon>Viridiplantae</taxon>
        <taxon>Streptophyta</taxon>
        <taxon>Embryophyta</taxon>
        <taxon>Tracheophyta</taxon>
        <taxon>Spermatophyta</taxon>
        <taxon>Magnoliopsida</taxon>
        <taxon>Liliopsida</taxon>
        <taxon>Poales</taxon>
        <taxon>Poaceae</taxon>
        <taxon>BOP clade</taxon>
        <taxon>Oryzoideae</taxon>
        <taxon>Oryzeae</taxon>
        <taxon>Oryzinae</taxon>
        <taxon>Oryza</taxon>
        <taxon>Oryza sativa</taxon>
    </lineage>
</organism>
<sequence>MQTAATSTFFANPHVKHLPGPFLRPSPHYGALVHLPSFRNKTPISIAMAASPSPPPLQELTITRPDDWHLHLREGDVLAAVLPHSAMHFGRAIVMPNLKPPVTTTARALEYREEILRALPPGSNFVPLMTLYLTDNTSPEEIKLAKKSGVVFAVKLYPSGATTNSQDGVTDIFGKCLPVLEEMARQEMPLLVHGEVTDQHVDTFDREKVFIEKILAPLVQRLPQLKIVMEHITTMDAVNFVESCKEGHVAATVTPQHLLLNRNALFQGGLQPHNYCLPVLKRETHRQAIVSAVTSGSKQYFLGTDSAPHDKRRKECSCGCAGIYSAPVALSLYAKVFEQAGALDKLEAFTSFNGPDFYGLPRNTSKIVLRKSAWKVPDTYSYSSGEIVPMFTGNTLEWLPSDQLEE</sequence>
<proteinExistence type="evidence at transcript level"/>
<feature type="transit peptide" description="Mitochondrion" evidence="2">
    <location>
        <begin position="1"/>
        <end position="41"/>
    </location>
</feature>
<feature type="chain" id="PRO_0000423079" description="Dihydroorotase, mitochondrial">
    <location>
        <begin position="42"/>
        <end position="406"/>
    </location>
</feature>
<feature type="binding site" evidence="1">
    <location>
        <position position="69"/>
    </location>
    <ligand>
        <name>Zn(2+)</name>
        <dbReference type="ChEBI" id="CHEBI:29105"/>
        <label>1</label>
    </ligand>
</feature>
<feature type="binding site" evidence="1">
    <location>
        <position position="71"/>
    </location>
    <ligand>
        <name>Zn(2+)</name>
        <dbReference type="ChEBI" id="CHEBI:29105"/>
        <label>1</label>
    </ligand>
</feature>
<feature type="binding site" description="via carbamate group" evidence="1">
    <location>
        <position position="155"/>
    </location>
    <ligand>
        <name>Zn(2+)</name>
        <dbReference type="ChEBI" id="CHEBI:29105"/>
        <label>1</label>
    </ligand>
</feature>
<feature type="binding site" description="via carbamate group" evidence="1">
    <location>
        <position position="155"/>
    </location>
    <ligand>
        <name>Zn(2+)</name>
        <dbReference type="ChEBI" id="CHEBI:29105"/>
        <label>2</label>
    </ligand>
</feature>
<feature type="binding site" evidence="1">
    <location>
        <position position="193"/>
    </location>
    <ligand>
        <name>Zn(2+)</name>
        <dbReference type="ChEBI" id="CHEBI:29105"/>
        <label>2</label>
    </ligand>
</feature>
<feature type="binding site" evidence="1">
    <location>
        <position position="231"/>
    </location>
    <ligand>
        <name>Zn(2+)</name>
        <dbReference type="ChEBI" id="CHEBI:29105"/>
        <label>2</label>
    </ligand>
</feature>
<feature type="binding site" evidence="1">
    <location>
        <position position="305"/>
    </location>
    <ligand>
        <name>Zn(2+)</name>
        <dbReference type="ChEBI" id="CHEBI:29105"/>
        <label>1</label>
    </ligand>
</feature>
<feature type="modified residue" description="N6-carboxylysine" evidence="1">
    <location>
        <position position="155"/>
    </location>
</feature>
<protein>
    <recommendedName>
        <fullName>Dihydroorotase, mitochondrial</fullName>
        <shortName>DHOase</shortName>
        <ecNumber>3.5.2.3</ecNumber>
    </recommendedName>
</protein>
<name>PYRC_ORYSJ</name>
<reference key="1">
    <citation type="journal article" date="2002" name="Nature">
        <title>The genome sequence and structure of rice chromosome 1.</title>
        <authorList>
            <person name="Sasaki T."/>
            <person name="Matsumoto T."/>
            <person name="Yamamoto K."/>
            <person name="Sakata K."/>
            <person name="Baba T."/>
            <person name="Katayose Y."/>
            <person name="Wu J."/>
            <person name="Niimura Y."/>
            <person name="Cheng Z."/>
            <person name="Nagamura Y."/>
            <person name="Antonio B.A."/>
            <person name="Kanamori H."/>
            <person name="Hosokawa S."/>
            <person name="Masukawa M."/>
            <person name="Arikawa K."/>
            <person name="Chiden Y."/>
            <person name="Hayashi M."/>
            <person name="Okamoto M."/>
            <person name="Ando T."/>
            <person name="Aoki H."/>
            <person name="Arita K."/>
            <person name="Hamada M."/>
            <person name="Harada C."/>
            <person name="Hijishita S."/>
            <person name="Honda M."/>
            <person name="Ichikawa Y."/>
            <person name="Idonuma A."/>
            <person name="Iijima M."/>
            <person name="Ikeda M."/>
            <person name="Ikeno M."/>
            <person name="Ito S."/>
            <person name="Ito T."/>
            <person name="Ito Y."/>
            <person name="Ito Y."/>
            <person name="Iwabuchi A."/>
            <person name="Kamiya K."/>
            <person name="Karasawa W."/>
            <person name="Katagiri S."/>
            <person name="Kikuta A."/>
            <person name="Kobayashi N."/>
            <person name="Kono I."/>
            <person name="Machita K."/>
            <person name="Maehara T."/>
            <person name="Mizuno H."/>
            <person name="Mizubayashi T."/>
            <person name="Mukai Y."/>
            <person name="Nagasaki H."/>
            <person name="Nakashima M."/>
            <person name="Nakama Y."/>
            <person name="Nakamichi Y."/>
            <person name="Nakamura M."/>
            <person name="Namiki N."/>
            <person name="Negishi M."/>
            <person name="Ohta I."/>
            <person name="Ono N."/>
            <person name="Saji S."/>
            <person name="Sakai K."/>
            <person name="Shibata M."/>
            <person name="Shimokawa T."/>
            <person name="Shomura A."/>
            <person name="Song J."/>
            <person name="Takazaki Y."/>
            <person name="Terasawa K."/>
            <person name="Tsuji K."/>
            <person name="Waki K."/>
            <person name="Yamagata H."/>
            <person name="Yamane H."/>
            <person name="Yoshiki S."/>
            <person name="Yoshihara R."/>
            <person name="Yukawa K."/>
            <person name="Zhong H."/>
            <person name="Iwama H."/>
            <person name="Endo T."/>
            <person name="Ito H."/>
            <person name="Hahn J.H."/>
            <person name="Kim H.-I."/>
            <person name="Eun M.-Y."/>
            <person name="Yano M."/>
            <person name="Jiang J."/>
            <person name="Gojobori T."/>
        </authorList>
    </citation>
    <scope>NUCLEOTIDE SEQUENCE [LARGE SCALE GENOMIC DNA]</scope>
    <source>
        <strain>cv. Nipponbare</strain>
    </source>
</reference>
<reference key="2">
    <citation type="journal article" date="2005" name="Nature">
        <title>The map-based sequence of the rice genome.</title>
        <authorList>
            <consortium name="International rice genome sequencing project (IRGSP)"/>
        </authorList>
    </citation>
    <scope>NUCLEOTIDE SEQUENCE [LARGE SCALE GENOMIC DNA]</scope>
    <source>
        <strain>cv. Nipponbare</strain>
    </source>
</reference>
<reference key="3">
    <citation type="journal article" date="2008" name="Nucleic Acids Res.">
        <title>The rice annotation project database (RAP-DB): 2008 update.</title>
        <authorList>
            <consortium name="The rice annotation project (RAP)"/>
        </authorList>
    </citation>
    <scope>GENOME REANNOTATION</scope>
    <source>
        <strain>cv. Nipponbare</strain>
    </source>
</reference>
<reference key="4">
    <citation type="journal article" date="2013" name="Rice">
        <title>Improvement of the Oryza sativa Nipponbare reference genome using next generation sequence and optical map data.</title>
        <authorList>
            <person name="Kawahara Y."/>
            <person name="de la Bastide M."/>
            <person name="Hamilton J.P."/>
            <person name="Kanamori H."/>
            <person name="McCombie W.R."/>
            <person name="Ouyang S."/>
            <person name="Schwartz D.C."/>
            <person name="Tanaka T."/>
            <person name="Wu J."/>
            <person name="Zhou S."/>
            <person name="Childs K.L."/>
            <person name="Davidson R.M."/>
            <person name="Lin H."/>
            <person name="Quesada-Ocampo L."/>
            <person name="Vaillancourt B."/>
            <person name="Sakai H."/>
            <person name="Lee S.S."/>
            <person name="Kim J."/>
            <person name="Numa H."/>
            <person name="Itoh T."/>
            <person name="Buell C.R."/>
            <person name="Matsumoto T."/>
        </authorList>
    </citation>
    <scope>GENOME REANNOTATION</scope>
    <source>
        <strain>cv. Nipponbare</strain>
    </source>
</reference>
<reference key="5">
    <citation type="journal article" date="2005" name="PLoS Biol.">
        <title>The genomes of Oryza sativa: a history of duplications.</title>
        <authorList>
            <person name="Yu J."/>
            <person name="Wang J."/>
            <person name="Lin W."/>
            <person name="Li S."/>
            <person name="Li H."/>
            <person name="Zhou J."/>
            <person name="Ni P."/>
            <person name="Dong W."/>
            <person name="Hu S."/>
            <person name="Zeng C."/>
            <person name="Zhang J."/>
            <person name="Zhang Y."/>
            <person name="Li R."/>
            <person name="Xu Z."/>
            <person name="Li S."/>
            <person name="Li X."/>
            <person name="Zheng H."/>
            <person name="Cong L."/>
            <person name="Lin L."/>
            <person name="Yin J."/>
            <person name="Geng J."/>
            <person name="Li G."/>
            <person name="Shi J."/>
            <person name="Liu J."/>
            <person name="Lv H."/>
            <person name="Li J."/>
            <person name="Wang J."/>
            <person name="Deng Y."/>
            <person name="Ran L."/>
            <person name="Shi X."/>
            <person name="Wang X."/>
            <person name="Wu Q."/>
            <person name="Li C."/>
            <person name="Ren X."/>
            <person name="Wang J."/>
            <person name="Wang X."/>
            <person name="Li D."/>
            <person name="Liu D."/>
            <person name="Zhang X."/>
            <person name="Ji Z."/>
            <person name="Zhao W."/>
            <person name="Sun Y."/>
            <person name="Zhang Z."/>
            <person name="Bao J."/>
            <person name="Han Y."/>
            <person name="Dong L."/>
            <person name="Ji J."/>
            <person name="Chen P."/>
            <person name="Wu S."/>
            <person name="Liu J."/>
            <person name="Xiao Y."/>
            <person name="Bu D."/>
            <person name="Tan J."/>
            <person name="Yang L."/>
            <person name="Ye C."/>
            <person name="Zhang J."/>
            <person name="Xu J."/>
            <person name="Zhou Y."/>
            <person name="Yu Y."/>
            <person name="Zhang B."/>
            <person name="Zhuang S."/>
            <person name="Wei H."/>
            <person name="Liu B."/>
            <person name="Lei M."/>
            <person name="Yu H."/>
            <person name="Li Y."/>
            <person name="Xu H."/>
            <person name="Wei S."/>
            <person name="He X."/>
            <person name="Fang L."/>
            <person name="Zhang Z."/>
            <person name="Zhang Y."/>
            <person name="Huang X."/>
            <person name="Su Z."/>
            <person name="Tong W."/>
            <person name="Li J."/>
            <person name="Tong Z."/>
            <person name="Li S."/>
            <person name="Ye J."/>
            <person name="Wang L."/>
            <person name="Fang L."/>
            <person name="Lei T."/>
            <person name="Chen C.-S."/>
            <person name="Chen H.-C."/>
            <person name="Xu Z."/>
            <person name="Li H."/>
            <person name="Huang H."/>
            <person name="Zhang F."/>
            <person name="Xu H."/>
            <person name="Li N."/>
            <person name="Zhao C."/>
            <person name="Li S."/>
            <person name="Dong L."/>
            <person name="Huang Y."/>
            <person name="Li L."/>
            <person name="Xi Y."/>
            <person name="Qi Q."/>
            <person name="Li W."/>
            <person name="Zhang B."/>
            <person name="Hu W."/>
            <person name="Zhang Y."/>
            <person name="Tian X."/>
            <person name="Jiao Y."/>
            <person name="Liang X."/>
            <person name="Jin J."/>
            <person name="Gao L."/>
            <person name="Zheng W."/>
            <person name="Hao B."/>
            <person name="Liu S.-M."/>
            <person name="Wang W."/>
            <person name="Yuan L."/>
            <person name="Cao M."/>
            <person name="McDermott J."/>
            <person name="Samudrala R."/>
            <person name="Wang J."/>
            <person name="Wong G.K.-S."/>
            <person name="Yang H."/>
        </authorList>
    </citation>
    <scope>NUCLEOTIDE SEQUENCE [LARGE SCALE GENOMIC DNA]</scope>
    <source>
        <strain>cv. Nipponbare</strain>
    </source>
</reference>
<reference key="6">
    <citation type="journal article" date="2003" name="Science">
        <title>Collection, mapping, and annotation of over 28,000 cDNA clones from japonica rice.</title>
        <authorList>
            <consortium name="The rice full-length cDNA consortium"/>
        </authorList>
    </citation>
    <scope>NUCLEOTIDE SEQUENCE [LARGE SCALE MRNA]</scope>
    <source>
        <strain>cv. Nipponbare</strain>
    </source>
</reference>
<evidence type="ECO:0000250" key="1">
    <source>
        <dbReference type="UniProtKB" id="P05020"/>
    </source>
</evidence>
<evidence type="ECO:0000255" key="2"/>
<evidence type="ECO:0000305" key="3"/>
<gene>
    <name type="primary">PYRC</name>
    <name type="ordered locus">Os01g0747500</name>
    <name type="ordered locus">LOC_Os01g54370</name>
    <name type="ORF">OsJ_03441</name>
    <name type="ORF">P0481E12.13</name>
</gene>
<comment type="catalytic activity">
    <reaction>
        <text>(S)-dihydroorotate + H2O = N-carbamoyl-L-aspartate + H(+)</text>
        <dbReference type="Rhea" id="RHEA:24296"/>
        <dbReference type="ChEBI" id="CHEBI:15377"/>
        <dbReference type="ChEBI" id="CHEBI:15378"/>
        <dbReference type="ChEBI" id="CHEBI:30864"/>
        <dbReference type="ChEBI" id="CHEBI:32814"/>
        <dbReference type="EC" id="3.5.2.3"/>
    </reaction>
</comment>
<comment type="cofactor">
    <cofactor evidence="1">
        <name>Zn(2+)</name>
        <dbReference type="ChEBI" id="CHEBI:29105"/>
    </cofactor>
    <text evidence="1">Binds 2 Zn(2+) ions per subunit.</text>
</comment>
<comment type="pathway">
    <text>Pyrimidine metabolism; UMP biosynthesis via de novo pathway; (S)-dihydroorotate from bicarbonate: step 3/3.</text>
</comment>
<comment type="subcellular location">
    <subcellularLocation>
        <location evidence="3">Mitochondrion</location>
    </subcellularLocation>
</comment>
<comment type="similarity">
    <text evidence="3">Belongs to the metallo-dependent hydrolases superfamily. DHOase family. Class II DHOase subfamily.</text>
</comment>
<comment type="sequence caution" evidence="3">
    <conflict type="erroneous initiation">
        <sequence resource="EMBL-CDS" id="BAB56025"/>
    </conflict>
    <text>Truncated N-terminus.</text>
</comment>
<comment type="sequence caution" evidence="3">
    <conflict type="erroneous initiation">
        <sequence resource="EMBL-CDS" id="EAZ13525"/>
    </conflict>
    <text>Truncated N-terminus.</text>
</comment>
<keyword id="KW-0378">Hydrolase</keyword>
<keyword id="KW-0479">Metal-binding</keyword>
<keyword id="KW-0496">Mitochondrion</keyword>
<keyword id="KW-0665">Pyrimidine biosynthesis</keyword>
<keyword id="KW-1185">Reference proteome</keyword>
<keyword id="KW-0809">Transit peptide</keyword>
<keyword id="KW-0862">Zinc</keyword>